<reference key="1">
    <citation type="journal article" date="2000" name="Nature">
        <title>Sequence and analysis of chromosome 3 of the plant Arabidopsis thaliana.</title>
        <authorList>
            <person name="Salanoubat M."/>
            <person name="Lemcke K."/>
            <person name="Rieger M."/>
            <person name="Ansorge W."/>
            <person name="Unseld M."/>
            <person name="Fartmann B."/>
            <person name="Valle G."/>
            <person name="Bloecker H."/>
            <person name="Perez-Alonso M."/>
            <person name="Obermaier B."/>
            <person name="Delseny M."/>
            <person name="Boutry M."/>
            <person name="Grivell L.A."/>
            <person name="Mache R."/>
            <person name="Puigdomenech P."/>
            <person name="De Simone V."/>
            <person name="Choisne N."/>
            <person name="Artiguenave F."/>
            <person name="Robert C."/>
            <person name="Brottier P."/>
            <person name="Wincker P."/>
            <person name="Cattolico L."/>
            <person name="Weissenbach J."/>
            <person name="Saurin W."/>
            <person name="Quetier F."/>
            <person name="Schaefer M."/>
            <person name="Mueller-Auer S."/>
            <person name="Gabel C."/>
            <person name="Fuchs M."/>
            <person name="Benes V."/>
            <person name="Wurmbach E."/>
            <person name="Drzonek H."/>
            <person name="Erfle H."/>
            <person name="Jordan N."/>
            <person name="Bangert S."/>
            <person name="Wiedelmann R."/>
            <person name="Kranz H."/>
            <person name="Voss H."/>
            <person name="Holland R."/>
            <person name="Brandt P."/>
            <person name="Nyakatura G."/>
            <person name="Vezzi A."/>
            <person name="D'Angelo M."/>
            <person name="Pallavicini A."/>
            <person name="Toppo S."/>
            <person name="Simionati B."/>
            <person name="Conrad A."/>
            <person name="Hornischer K."/>
            <person name="Kauer G."/>
            <person name="Loehnert T.-H."/>
            <person name="Nordsiek G."/>
            <person name="Reichelt J."/>
            <person name="Scharfe M."/>
            <person name="Schoen O."/>
            <person name="Bargues M."/>
            <person name="Terol J."/>
            <person name="Climent J."/>
            <person name="Navarro P."/>
            <person name="Collado C."/>
            <person name="Perez-Perez A."/>
            <person name="Ottenwaelder B."/>
            <person name="Duchemin D."/>
            <person name="Cooke R."/>
            <person name="Laudie M."/>
            <person name="Berger-Llauro C."/>
            <person name="Purnelle B."/>
            <person name="Masuy D."/>
            <person name="de Haan M."/>
            <person name="Maarse A.C."/>
            <person name="Alcaraz J.-P."/>
            <person name="Cottet A."/>
            <person name="Casacuberta E."/>
            <person name="Monfort A."/>
            <person name="Argiriou A."/>
            <person name="Flores M."/>
            <person name="Liguori R."/>
            <person name="Vitale D."/>
            <person name="Mannhaupt G."/>
            <person name="Haase D."/>
            <person name="Schoof H."/>
            <person name="Rudd S."/>
            <person name="Zaccaria P."/>
            <person name="Mewes H.-W."/>
            <person name="Mayer K.F.X."/>
            <person name="Kaul S."/>
            <person name="Town C.D."/>
            <person name="Koo H.L."/>
            <person name="Tallon L.J."/>
            <person name="Jenkins J."/>
            <person name="Rooney T."/>
            <person name="Rizzo M."/>
            <person name="Walts A."/>
            <person name="Utterback T."/>
            <person name="Fujii C.Y."/>
            <person name="Shea T.P."/>
            <person name="Creasy T.H."/>
            <person name="Haas B."/>
            <person name="Maiti R."/>
            <person name="Wu D."/>
            <person name="Peterson J."/>
            <person name="Van Aken S."/>
            <person name="Pai G."/>
            <person name="Militscher J."/>
            <person name="Sellers P."/>
            <person name="Gill J.E."/>
            <person name="Feldblyum T.V."/>
            <person name="Preuss D."/>
            <person name="Lin X."/>
            <person name="Nierman W.C."/>
            <person name="Salzberg S.L."/>
            <person name="White O."/>
            <person name="Venter J.C."/>
            <person name="Fraser C.M."/>
            <person name="Kaneko T."/>
            <person name="Nakamura Y."/>
            <person name="Sato S."/>
            <person name="Kato T."/>
            <person name="Asamizu E."/>
            <person name="Sasamoto S."/>
            <person name="Kimura T."/>
            <person name="Idesawa K."/>
            <person name="Kawashima K."/>
            <person name="Kishida Y."/>
            <person name="Kiyokawa C."/>
            <person name="Kohara M."/>
            <person name="Matsumoto M."/>
            <person name="Matsuno A."/>
            <person name="Muraki A."/>
            <person name="Nakayama S."/>
            <person name="Nakazaki N."/>
            <person name="Shinpo S."/>
            <person name="Takeuchi C."/>
            <person name="Wada T."/>
            <person name="Watanabe A."/>
            <person name="Yamada M."/>
            <person name="Yasuda M."/>
            <person name="Tabata S."/>
        </authorList>
    </citation>
    <scope>NUCLEOTIDE SEQUENCE [LARGE SCALE GENOMIC DNA]</scope>
    <source>
        <strain>cv. Columbia</strain>
    </source>
</reference>
<reference key="2">
    <citation type="journal article" date="2017" name="Plant J.">
        <title>Araport11: a complete reannotation of the Arabidopsis thaliana reference genome.</title>
        <authorList>
            <person name="Cheng C.Y."/>
            <person name="Krishnakumar V."/>
            <person name="Chan A.P."/>
            <person name="Thibaud-Nissen F."/>
            <person name="Schobel S."/>
            <person name="Town C.D."/>
        </authorList>
    </citation>
    <scope>GENOME REANNOTATION</scope>
    <source>
        <strain>cv. Columbia</strain>
    </source>
</reference>
<reference key="3">
    <citation type="journal article" date="2003" name="Science">
        <title>Empirical analysis of transcriptional activity in the Arabidopsis genome.</title>
        <authorList>
            <person name="Yamada K."/>
            <person name="Lim J."/>
            <person name="Dale J.M."/>
            <person name="Chen H."/>
            <person name="Shinn P."/>
            <person name="Palm C.J."/>
            <person name="Southwick A.M."/>
            <person name="Wu H.C."/>
            <person name="Kim C.J."/>
            <person name="Nguyen M."/>
            <person name="Pham P.K."/>
            <person name="Cheuk R.F."/>
            <person name="Karlin-Newmann G."/>
            <person name="Liu S.X."/>
            <person name="Lam B."/>
            <person name="Sakano H."/>
            <person name="Wu T."/>
            <person name="Yu G."/>
            <person name="Miranda M."/>
            <person name="Quach H.L."/>
            <person name="Tripp M."/>
            <person name="Chang C.H."/>
            <person name="Lee J.M."/>
            <person name="Toriumi M.J."/>
            <person name="Chan M.M."/>
            <person name="Tang C.C."/>
            <person name="Onodera C.S."/>
            <person name="Deng J.M."/>
            <person name="Akiyama K."/>
            <person name="Ansari Y."/>
            <person name="Arakawa T."/>
            <person name="Banh J."/>
            <person name="Banno F."/>
            <person name="Bowser L."/>
            <person name="Brooks S.Y."/>
            <person name="Carninci P."/>
            <person name="Chao Q."/>
            <person name="Choy N."/>
            <person name="Enju A."/>
            <person name="Goldsmith A.D."/>
            <person name="Gurjal M."/>
            <person name="Hansen N.F."/>
            <person name="Hayashizaki Y."/>
            <person name="Johnson-Hopson C."/>
            <person name="Hsuan V.W."/>
            <person name="Iida K."/>
            <person name="Karnes M."/>
            <person name="Khan S."/>
            <person name="Koesema E."/>
            <person name="Ishida J."/>
            <person name="Jiang P.X."/>
            <person name="Jones T."/>
            <person name="Kawai J."/>
            <person name="Kamiya A."/>
            <person name="Meyers C."/>
            <person name="Nakajima M."/>
            <person name="Narusaka M."/>
            <person name="Seki M."/>
            <person name="Sakurai T."/>
            <person name="Satou M."/>
            <person name="Tamse R."/>
            <person name="Vaysberg M."/>
            <person name="Wallender E.K."/>
            <person name="Wong C."/>
            <person name="Yamamura Y."/>
            <person name="Yuan S."/>
            <person name="Shinozaki K."/>
            <person name="Davis R.W."/>
            <person name="Theologis A."/>
            <person name="Ecker J.R."/>
        </authorList>
    </citation>
    <scope>NUCLEOTIDE SEQUENCE [LARGE SCALE MRNA]</scope>
    <source>
        <strain>cv. Columbia</strain>
    </source>
</reference>
<reference key="4">
    <citation type="submission" date="2006-07" db="EMBL/GenBank/DDBJ databases">
        <title>Large-scale analysis of RIKEN Arabidopsis full-length (RAFL) cDNAs.</title>
        <authorList>
            <person name="Totoki Y."/>
            <person name="Seki M."/>
            <person name="Ishida J."/>
            <person name="Nakajima M."/>
            <person name="Enju A."/>
            <person name="Kamiya A."/>
            <person name="Narusaka M."/>
            <person name="Shin-i T."/>
            <person name="Nakagawa M."/>
            <person name="Sakamoto N."/>
            <person name="Oishi K."/>
            <person name="Kohara Y."/>
            <person name="Kobayashi M."/>
            <person name="Toyoda A."/>
            <person name="Sakaki Y."/>
            <person name="Sakurai T."/>
            <person name="Iida K."/>
            <person name="Akiyama K."/>
            <person name="Satou M."/>
            <person name="Toyoda T."/>
            <person name="Konagaya A."/>
            <person name="Carninci P."/>
            <person name="Kawai J."/>
            <person name="Hayashizaki Y."/>
            <person name="Shinozaki K."/>
        </authorList>
    </citation>
    <scope>NUCLEOTIDE SEQUENCE [LARGE SCALE MRNA]</scope>
    <source>
        <strain>cv. Columbia</strain>
    </source>
</reference>
<reference key="5">
    <citation type="journal article" date="2007" name="Mol. Cell. Proteomics">
        <title>Multidimensional protein identification technology (MudPIT) analysis of ubiquitinated proteins in plants.</title>
        <authorList>
            <person name="Maor R."/>
            <person name="Jones A."/>
            <person name="Nuehse T.S."/>
            <person name="Studholme D.J."/>
            <person name="Peck S.C."/>
            <person name="Shirasu K."/>
        </authorList>
    </citation>
    <scope>IDENTIFICATION BY MASS SPECTROMETRY [LARGE SCALE ANALYSIS]</scope>
    <source>
        <strain>cv. Landsberg erecta</strain>
    </source>
</reference>
<reference key="6">
    <citation type="journal article" date="2007" name="Plant Mol. Biol.">
        <title>IBR3, a novel peroxisomal acyl-CoA dehydrogenase-like protein required for indole-3-butyric acid response.</title>
        <authorList>
            <person name="Zolman B.K."/>
            <person name="Nyberg M."/>
            <person name="Bartel B."/>
        </authorList>
    </citation>
    <scope>FUNCTION</scope>
    <scope>MUTAGENESIS OF HIS-229</scope>
    <scope>DISRUPTION PHENOTYPE</scope>
</reference>
<reference key="7">
    <citation type="journal article" date="2008" name="Genetics">
        <title>Identification and characterization of Arabidopsis indole-3-butyric acid response mutants defective in novel peroxisomal enzymes.</title>
        <authorList>
            <person name="Zolman B.K."/>
            <person name="Martinez N."/>
            <person name="Millius A."/>
            <person name="Adham A.R."/>
            <person name="Bartel B."/>
        </authorList>
    </citation>
    <scope>DISRUPTION PHENOTYPE</scope>
</reference>
<reference key="8">
    <citation type="journal article" date="2010" name="Plant Physiol.">
        <title>Conversion of endogenous indole-3-butyric acid to indole-3-acetic acid drives cell expansion in Arabidopsis seedlings.</title>
        <authorList>
            <person name="Strader L.C."/>
            <person name="Culler A.H."/>
            <person name="Cohen J.D."/>
            <person name="Bartel B."/>
        </authorList>
    </citation>
    <scope>FUNCTION</scope>
    <scope>DISRUPTION PHENOTYPE</scope>
</reference>
<reference key="9">
    <citation type="journal article" date="2012" name="Mol. Cell. Proteomics">
        <title>Comparative large-scale characterisation of plant vs. mammal proteins reveals similar and idiosyncratic N-alpha acetylation features.</title>
        <authorList>
            <person name="Bienvenut W.V."/>
            <person name="Sumpton D."/>
            <person name="Martinez A."/>
            <person name="Lilla S."/>
            <person name="Espagne C."/>
            <person name="Meinnel T."/>
            <person name="Giglione C."/>
        </authorList>
    </citation>
    <scope>ACETYLATION [LARGE SCALE ANALYSIS] AT GLY-2</scope>
    <scope>CLEAVAGE OF INITIATOR METHIONINE [LARGE SCALE ANALYSIS]</scope>
    <scope>IDENTIFICATION BY MASS SPECTROMETRY [LARGE SCALE ANALYSIS]</scope>
</reference>
<reference key="10">
    <citation type="journal article" date="2013" name="Plant Biol.">
        <title>Arabidopsis thaliana transgenics overexpressing IBR3 show enhanced susceptibility to the bacterium Pseudomonas syringae.</title>
        <authorList>
            <person name="Huang T.Y."/>
            <person name="Desclos-Theveniau M."/>
            <person name="Chien C.T."/>
            <person name="Zimmerli L."/>
        </authorList>
    </citation>
    <scope>FUNCTION</scope>
    <scope>INDUCTION</scope>
</reference>
<dbReference type="EC" id="1.3.99.-" evidence="7"/>
<dbReference type="EMBL" id="AC023912">
    <property type="protein sequence ID" value="AAF63817.1"/>
    <property type="status" value="ALT_SEQ"/>
    <property type="molecule type" value="Genomic_DNA"/>
</dbReference>
<dbReference type="EMBL" id="AC023912">
    <property type="protein sequence ID" value="AAF63818.1"/>
    <property type="status" value="ALT_SEQ"/>
    <property type="molecule type" value="Genomic_DNA"/>
</dbReference>
<dbReference type="EMBL" id="CP002686">
    <property type="protein sequence ID" value="AEE74461.1"/>
    <property type="molecule type" value="Genomic_DNA"/>
</dbReference>
<dbReference type="EMBL" id="AY091014">
    <property type="protein sequence ID" value="AAM14036.1"/>
    <property type="molecule type" value="mRNA"/>
</dbReference>
<dbReference type="EMBL" id="BT002365">
    <property type="protein sequence ID" value="AAN86198.1"/>
    <property type="molecule type" value="mRNA"/>
</dbReference>
<dbReference type="EMBL" id="AK176022">
    <property type="protein sequence ID" value="BAD43785.1"/>
    <property type="molecule type" value="mRNA"/>
</dbReference>
<dbReference type="EMBL" id="AK229932">
    <property type="protein sequence ID" value="BAF01758.1"/>
    <property type="molecule type" value="mRNA"/>
</dbReference>
<dbReference type="RefSeq" id="NP_187337.2">
    <property type="nucleotide sequence ID" value="NM_111561.5"/>
</dbReference>
<dbReference type="SMR" id="Q8RWZ3"/>
<dbReference type="FunCoup" id="Q8RWZ3">
    <property type="interactions" value="2401"/>
</dbReference>
<dbReference type="IntAct" id="Q8RWZ3">
    <property type="interactions" value="3"/>
</dbReference>
<dbReference type="STRING" id="3702.Q8RWZ3"/>
<dbReference type="iPTMnet" id="Q8RWZ3"/>
<dbReference type="PaxDb" id="3702-AT3G06810.1"/>
<dbReference type="ProteomicsDB" id="248566"/>
<dbReference type="DNASU" id="819865"/>
<dbReference type="EnsemblPlants" id="AT3G06810.1">
    <property type="protein sequence ID" value="AT3G06810.1"/>
    <property type="gene ID" value="AT3G06810"/>
</dbReference>
<dbReference type="GeneID" id="819865"/>
<dbReference type="Gramene" id="AT3G06810.1">
    <property type="protein sequence ID" value="AT3G06810.1"/>
    <property type="gene ID" value="AT3G06810"/>
</dbReference>
<dbReference type="KEGG" id="ath:AT3G06810"/>
<dbReference type="Araport" id="AT3G06810"/>
<dbReference type="TAIR" id="AT3G06810">
    <property type="gene designation" value="IBR3"/>
</dbReference>
<dbReference type="eggNOG" id="KOG1469">
    <property type="taxonomic scope" value="Eukaryota"/>
</dbReference>
<dbReference type="HOGENOM" id="CLU_007526_3_0_1"/>
<dbReference type="InParanoid" id="Q8RWZ3"/>
<dbReference type="OMA" id="AIAMIKI"/>
<dbReference type="OrthoDB" id="434771at2759"/>
<dbReference type="PhylomeDB" id="Q8RWZ3"/>
<dbReference type="BioCyc" id="ARA:AT3G06810-MONOMER"/>
<dbReference type="PRO" id="PR:Q8RWZ3"/>
<dbReference type="Proteomes" id="UP000006548">
    <property type="component" value="Chromosome 3"/>
</dbReference>
<dbReference type="ExpressionAtlas" id="Q8RWZ3">
    <property type="expression patterns" value="baseline and differential"/>
</dbReference>
<dbReference type="GO" id="GO:0005777">
    <property type="term" value="C:peroxisome"/>
    <property type="evidence" value="ECO:0007669"/>
    <property type="project" value="UniProtKB-SubCell"/>
</dbReference>
<dbReference type="GO" id="GO:0050660">
    <property type="term" value="F:flavin adenine dinucleotide binding"/>
    <property type="evidence" value="ECO:0007669"/>
    <property type="project" value="InterPro"/>
</dbReference>
<dbReference type="GO" id="GO:0016627">
    <property type="term" value="F:oxidoreductase activity, acting on the CH-CH group of donors"/>
    <property type="evidence" value="ECO:0007669"/>
    <property type="project" value="InterPro"/>
</dbReference>
<dbReference type="GO" id="GO:0006631">
    <property type="term" value="P:fatty acid metabolic process"/>
    <property type="evidence" value="ECO:0007669"/>
    <property type="project" value="UniProtKB-KW"/>
</dbReference>
<dbReference type="GO" id="GO:0048767">
    <property type="term" value="P:root hair elongation"/>
    <property type="evidence" value="ECO:0000315"/>
    <property type="project" value="TAIR"/>
</dbReference>
<dbReference type="CDD" id="cd05154">
    <property type="entry name" value="ACAD10_11_N-like"/>
    <property type="match status" value="1"/>
</dbReference>
<dbReference type="CDD" id="cd01155">
    <property type="entry name" value="ACAD_FadE2"/>
    <property type="match status" value="1"/>
</dbReference>
<dbReference type="FunFam" id="2.40.110.10:FF:000002">
    <property type="entry name" value="Acyl-CoA dehydrogenase fadE12"/>
    <property type="match status" value="1"/>
</dbReference>
<dbReference type="FunFam" id="1.20.140.10:FF:000018">
    <property type="entry name" value="Acyl-CoA dehydrogenase family member 10"/>
    <property type="match status" value="1"/>
</dbReference>
<dbReference type="FunFam" id="1.10.540.10:FF:000016">
    <property type="entry name" value="acyl-CoA dehydrogenase family member 11"/>
    <property type="match status" value="1"/>
</dbReference>
<dbReference type="Gene3D" id="3.90.1200.10">
    <property type="match status" value="1"/>
</dbReference>
<dbReference type="Gene3D" id="1.10.540.10">
    <property type="entry name" value="Acyl-CoA dehydrogenase/oxidase, N-terminal domain"/>
    <property type="match status" value="1"/>
</dbReference>
<dbReference type="Gene3D" id="2.40.110.10">
    <property type="entry name" value="Butyryl-CoA Dehydrogenase, subunit A, domain 2"/>
    <property type="match status" value="1"/>
</dbReference>
<dbReference type="Gene3D" id="1.20.140.10">
    <property type="entry name" value="Butyryl-CoA Dehydrogenase, subunit A, domain 3"/>
    <property type="match status" value="1"/>
</dbReference>
<dbReference type="Gene3D" id="3.30.200.20">
    <property type="entry name" value="Phosphorylase Kinase, domain 1"/>
    <property type="match status" value="1"/>
</dbReference>
<dbReference type="InterPro" id="IPR041726">
    <property type="entry name" value="ACAD10_11_N"/>
</dbReference>
<dbReference type="InterPro" id="IPR050741">
    <property type="entry name" value="Acyl-CoA_dehydrogenase"/>
</dbReference>
<dbReference type="InterPro" id="IPR006091">
    <property type="entry name" value="Acyl-CoA_Oxase/DH_mid-dom"/>
</dbReference>
<dbReference type="InterPro" id="IPR046373">
    <property type="entry name" value="Acyl-CoA_Oxase/DH_mid-dom_sf"/>
</dbReference>
<dbReference type="InterPro" id="IPR036250">
    <property type="entry name" value="AcylCo_DH-like_C"/>
</dbReference>
<dbReference type="InterPro" id="IPR009075">
    <property type="entry name" value="AcylCo_DH/oxidase_C"/>
</dbReference>
<dbReference type="InterPro" id="IPR037069">
    <property type="entry name" value="AcylCoA_DH/ox_N_sf"/>
</dbReference>
<dbReference type="InterPro" id="IPR009100">
    <property type="entry name" value="AcylCoA_DH/oxidase_NM_dom_sf"/>
</dbReference>
<dbReference type="InterPro" id="IPR002575">
    <property type="entry name" value="Aminoglycoside_PTrfase"/>
</dbReference>
<dbReference type="InterPro" id="IPR011009">
    <property type="entry name" value="Kinase-like_dom_sf"/>
</dbReference>
<dbReference type="PANTHER" id="PTHR48083:SF13">
    <property type="entry name" value="ACYL-COA DEHYDROGENASE FAMILY MEMBER 11"/>
    <property type="match status" value="1"/>
</dbReference>
<dbReference type="PANTHER" id="PTHR48083">
    <property type="entry name" value="MEDIUM-CHAIN SPECIFIC ACYL-COA DEHYDROGENASE, MITOCHONDRIAL-RELATED"/>
    <property type="match status" value="1"/>
</dbReference>
<dbReference type="Pfam" id="PF00441">
    <property type="entry name" value="Acyl-CoA_dh_1"/>
    <property type="match status" value="1"/>
</dbReference>
<dbReference type="Pfam" id="PF02770">
    <property type="entry name" value="Acyl-CoA_dh_M"/>
    <property type="match status" value="1"/>
</dbReference>
<dbReference type="Pfam" id="PF01636">
    <property type="entry name" value="APH"/>
    <property type="match status" value="1"/>
</dbReference>
<dbReference type="SUPFAM" id="SSF47203">
    <property type="entry name" value="Acyl-CoA dehydrogenase C-terminal domain-like"/>
    <property type="match status" value="1"/>
</dbReference>
<dbReference type="SUPFAM" id="SSF56645">
    <property type="entry name" value="Acyl-CoA dehydrogenase NM domain-like"/>
    <property type="match status" value="1"/>
</dbReference>
<dbReference type="SUPFAM" id="SSF56112">
    <property type="entry name" value="Protein kinase-like (PK-like)"/>
    <property type="match status" value="1"/>
</dbReference>
<keyword id="KW-0007">Acetylation</keyword>
<keyword id="KW-0274">FAD</keyword>
<keyword id="KW-0276">Fatty acid metabolism</keyword>
<keyword id="KW-0285">Flavoprotein</keyword>
<keyword id="KW-0443">Lipid metabolism</keyword>
<keyword id="KW-0560">Oxidoreductase</keyword>
<keyword id="KW-0576">Peroxisome</keyword>
<keyword id="KW-1185">Reference proteome</keyword>
<accession>Q8RWZ3</accession>
<accession>Q0WM98</accession>
<accession>Q67ZU5</accession>
<accession>Q9M7Y6</accession>
<accession>Q9M7Y7</accession>
<protein>
    <recommendedName>
        <fullName evidence="7">Probable acyl-CoA dehydrogenase IBR3</fullName>
        <ecNumber evidence="7">1.3.99.-</ecNumber>
    </recommendedName>
    <alternativeName>
        <fullName evidence="6">Protein INDOLE-3-BUTYRIC ACID RESPONSE 3</fullName>
    </alternativeName>
</protein>
<proteinExistence type="evidence at protein level"/>
<gene>
    <name evidence="6" type="primary">IBR3</name>
    <name evidence="8" type="ordered locus">At3g06810/At3g06800</name>
    <name evidence="9 10" type="ORF">F3E22.5/F3E22.6</name>
</gene>
<organism>
    <name type="scientific">Arabidopsis thaliana</name>
    <name type="common">Mouse-ear cress</name>
    <dbReference type="NCBI Taxonomy" id="3702"/>
    <lineage>
        <taxon>Eukaryota</taxon>
        <taxon>Viridiplantae</taxon>
        <taxon>Streptophyta</taxon>
        <taxon>Embryophyta</taxon>
        <taxon>Tracheophyta</taxon>
        <taxon>Spermatophyta</taxon>
        <taxon>Magnoliopsida</taxon>
        <taxon>eudicotyledons</taxon>
        <taxon>Gunneridae</taxon>
        <taxon>Pentapetalae</taxon>
        <taxon>rosids</taxon>
        <taxon>malvids</taxon>
        <taxon>Brassicales</taxon>
        <taxon>Brassicaceae</taxon>
        <taxon>Camelineae</taxon>
        <taxon>Arabidopsis</taxon>
    </lineage>
</organism>
<sequence>MGSSTGDLVTRIQSAHRFDHDALFRFAADNVSGFPTNPSQFKVSQFGHGQSNPTFLIEVGSGSSLKRYVLRKKPPGKLLQSAHAVDREFQVLRALGEHTQVPVPKVFCLCTDPAVIGTAFYIMEFMEGRIFIDPKLPNVAPERRNAIYRATAKALASLHSADVDAIGLEKYGRRGNYCKRQIDRWFKQYLASTSEGKPERNPKMFELVDWLRKNIPAEDSTGATSGLVHGDFRIDNLVFHPSEDRVIGIIDWELSTLGNQMCDVAYSCMHYIVNVQLDKEHVSEGFETTGLPEGMLSMPEFLLEYCSASGKPWPAANWKFYVAFSLFRAASIYTGVYSRWLMGNASAGERARNTGVQANELVESALGYIARENVLPEHPPSVQRDVSPSYESLVDGSGRFIPNRKVLELRQKLIKFMETHIYPMENEFSKLAQSDMRWTVHPQEEKLKEMAKREGLWNLFVPVDSAARARRELAATENKHNLSGKSFDQLFGEGLTNLEYGYLCEIMGRSVWAPQVFNCGAPDTGNMEVILRYGNKEQISEWLIPLLEGRIRSGFAMTEPQVASSDATNIECSIRRQGDSYVINGTKWWTSGAMDPRCRVLILMGKTDFNAPKHKQQSMILVDMRTPGISVKRPLTVFGFDDAPHGHAEISFENVVVPAKNILLGEGRGFEIAQGRLGPGRLHHCMRLIGAAERGMELMAQRALSRKTFGKFIAQHGSFVSDLAKLRVELEGTRLLVLEAADHLDKFGNKKARGILAMAKVAAPNMALKVLDTAIQVHGAAGVSSDTVLAHLWATARTLRIADGPDEVHLGTIGKLELQRASKL</sequence>
<evidence type="ECO:0000250" key="1">
    <source>
        <dbReference type="UniProtKB" id="Q709F0"/>
    </source>
</evidence>
<evidence type="ECO:0000269" key="2">
    <source>
    </source>
</evidence>
<evidence type="ECO:0000269" key="3">
    <source>
    </source>
</evidence>
<evidence type="ECO:0000269" key="4">
    <source>
    </source>
</evidence>
<evidence type="ECO:0000269" key="5">
    <source>
    </source>
</evidence>
<evidence type="ECO:0000303" key="6">
    <source>
    </source>
</evidence>
<evidence type="ECO:0000305" key="7"/>
<evidence type="ECO:0000312" key="8">
    <source>
        <dbReference type="Araport" id="AT3G06810"/>
    </source>
</evidence>
<evidence type="ECO:0000312" key="9">
    <source>
        <dbReference type="EMBL" id="AAF63817.1"/>
    </source>
</evidence>
<evidence type="ECO:0000312" key="10">
    <source>
        <dbReference type="EMBL" id="AAF63818.1"/>
    </source>
</evidence>
<evidence type="ECO:0007744" key="11">
    <source>
    </source>
</evidence>
<comment type="function">
    <text evidence="2 4 5">Involved with IBR1 and IBR10 in the peroxisomal beta-oxidation of indole-3-butyric acid (IBA) to form indole-3-acetic acid (IAA), a biologically active auxin (PubMed:20562230). May be responsible for catalyzing the first step in IBA-CoA beta-oxidation (PubMed:17277896). May play a role in defense response to pathogenic bacteria (PubMed:23906045).</text>
</comment>
<comment type="catalytic activity">
    <reaction evidence="7">
        <text>a 2,3-saturated acyl-CoA + A = a 2,3-dehydroacyl-CoA + AH2</text>
        <dbReference type="Rhea" id="RHEA:48608"/>
        <dbReference type="ChEBI" id="CHEBI:13193"/>
        <dbReference type="ChEBI" id="CHEBI:17499"/>
        <dbReference type="ChEBI" id="CHEBI:60015"/>
        <dbReference type="ChEBI" id="CHEBI:65111"/>
    </reaction>
</comment>
<comment type="cofactor">
    <cofactor evidence="1">
        <name>FAD</name>
        <dbReference type="ChEBI" id="CHEBI:57692"/>
    </cofactor>
</comment>
<comment type="subcellular location">
    <subcellularLocation>
        <location evidence="7">Peroxisome</location>
    </subcellularLocation>
</comment>
<comment type="induction">
    <text evidence="5">By infection with the bacterial pathogen P.syringae pv. tomato strain DC3000.</text>
</comment>
<comment type="disruption phenotype">
    <text evidence="2 3 4">Defective in root hair expansion (PubMed:20562230). Mutant plants are resistant to the inhibitory effect of intermediate levels of indole-3-butyric acid (IBA) and 2,4-DB on root elongation (PubMed:17277896, PubMed:18725356).</text>
</comment>
<comment type="miscellaneous">
    <text evidence="5">Plants over-expressing IBR3 exhibit enhanced susceptibility to the bacterial pathogen P.syringae pv. tomato strain DC3000.</text>
</comment>
<comment type="similarity">
    <text evidence="7">Belongs to the acyl-CoA dehydrogenase family.</text>
</comment>
<comment type="sequence caution" evidence="7">
    <conflict type="erroneous gene model prediction">
        <sequence resource="EMBL-CDS" id="AAF63817"/>
    </conflict>
    <text>Was originally thought to correspond to two different genes At3g06800 and At3g06810.</text>
</comment>
<comment type="sequence caution" evidence="7">
    <conflict type="erroneous gene model prediction">
        <sequence resource="EMBL-CDS" id="AAF63818"/>
    </conflict>
    <text>Was originally thought to correspond to two different genes At3g06800 and At3g06810.</text>
</comment>
<name>IBR3_ARATH</name>
<feature type="initiator methionine" description="Removed" evidence="11">
    <location>
        <position position="1"/>
    </location>
</feature>
<feature type="chain" id="PRO_0000432488" description="Probable acyl-CoA dehydrogenase IBR3">
    <location>
        <begin position="2"/>
        <end position="824"/>
    </location>
</feature>
<feature type="short sequence motif" description="Microbody targeting signal" evidence="7">
    <location>
        <begin position="822"/>
        <end position="824"/>
    </location>
</feature>
<feature type="binding site" evidence="1">
    <location>
        <begin position="555"/>
        <end position="565"/>
    </location>
    <ligand>
        <name>FAD</name>
        <dbReference type="ChEBI" id="CHEBI:57692"/>
    </ligand>
</feature>
<feature type="binding site" evidence="1">
    <location>
        <begin position="589"/>
        <end position="591"/>
    </location>
    <ligand>
        <name>FAD</name>
        <dbReference type="ChEBI" id="CHEBI:57692"/>
    </ligand>
</feature>
<feature type="binding site" evidence="1">
    <location>
        <position position="706"/>
    </location>
    <ligand>
        <name>FAD</name>
        <dbReference type="ChEBI" id="CHEBI:57692"/>
    </ligand>
</feature>
<feature type="binding site" evidence="1">
    <location>
        <begin position="776"/>
        <end position="780"/>
    </location>
    <ligand>
        <name>FAD</name>
        <dbReference type="ChEBI" id="CHEBI:57692"/>
    </ligand>
</feature>
<feature type="binding site" evidence="1">
    <location>
        <position position="776"/>
    </location>
    <ligand>
        <name>FAD</name>
        <dbReference type="ChEBI" id="CHEBI:57692"/>
    </ligand>
</feature>
<feature type="modified residue" description="N-acetylglycine" evidence="11">
    <location>
        <position position="2"/>
    </location>
</feature>
<feature type="mutagenesis site" description="In ibr3-11; resistance to the inhibitory effect of intermediate levels of indole-3-butyric acid (IBA) on root elongation." evidence="2">
    <original>H</original>
    <variation>Y</variation>
    <location>
        <position position="229"/>
    </location>
</feature>
<feature type="sequence conflict" description="In Ref. 4; BAD43785." evidence="7" ref="4">
    <original>V</original>
    <variation>D</variation>
    <location>
        <position position="246"/>
    </location>
</feature>
<feature type="sequence conflict" description="In Ref. 4; BAF01758." evidence="7" ref="4">
    <original>T</original>
    <variation>A</variation>
    <location>
        <position position="558"/>
    </location>
</feature>